<keyword id="KW-0963">Cytoplasm</keyword>
<keyword id="KW-0342">GTP-binding</keyword>
<keyword id="KW-0460">Magnesium</keyword>
<keyword id="KW-0479">Metal-binding</keyword>
<keyword id="KW-0501">Molybdenum cofactor biosynthesis</keyword>
<keyword id="KW-0547">Nucleotide-binding</keyword>
<keyword id="KW-0808">Transferase</keyword>
<feature type="chain" id="PRO_1000019096" description="Probable molybdenum cofactor guanylyltransferase">
    <location>
        <begin position="1"/>
        <end position="207"/>
    </location>
</feature>
<feature type="binding site" evidence="1">
    <location>
        <begin position="9"/>
        <end position="11"/>
    </location>
    <ligand>
        <name>GTP</name>
        <dbReference type="ChEBI" id="CHEBI:37565"/>
    </ligand>
</feature>
<feature type="binding site" evidence="1">
    <location>
        <position position="21"/>
    </location>
    <ligand>
        <name>GTP</name>
        <dbReference type="ChEBI" id="CHEBI:37565"/>
    </ligand>
</feature>
<feature type="binding site" evidence="1">
    <location>
        <position position="97"/>
    </location>
    <ligand>
        <name>GTP</name>
        <dbReference type="ChEBI" id="CHEBI:37565"/>
    </ligand>
</feature>
<feature type="binding site" evidence="1">
    <location>
        <position position="97"/>
    </location>
    <ligand>
        <name>Mg(2+)</name>
        <dbReference type="ChEBI" id="CHEBI:18420"/>
    </ligand>
</feature>
<organism>
    <name type="scientific">Trichormus variabilis (strain ATCC 29413 / PCC 7937)</name>
    <name type="common">Anabaena variabilis</name>
    <dbReference type="NCBI Taxonomy" id="240292"/>
    <lineage>
        <taxon>Bacteria</taxon>
        <taxon>Bacillati</taxon>
        <taxon>Cyanobacteriota</taxon>
        <taxon>Cyanophyceae</taxon>
        <taxon>Nostocales</taxon>
        <taxon>Nostocaceae</taxon>
        <taxon>Trichormus</taxon>
    </lineage>
</organism>
<sequence>MNNLTAIVLAGGQSSRMGQDKALITVQGVPLLQFVCNIAASCAEIVYIVTPWPERYEHLVLPRCQFIPEAGTQGPLIGFAQGLAQVKSEWVLLLACDLPKLRVEVLQEWAANLDSVPEEAIATLPHHAKGWEPLCGFYRRRCSPPLLEFIHQGGRSFQQWLQHHSVQVLALPTPEILFNCNTPEDLAVIQGEFDDLSPNPSPTRRGA</sequence>
<proteinExistence type="inferred from homology"/>
<reference key="1">
    <citation type="journal article" date="2014" name="Stand. Genomic Sci.">
        <title>Complete genome sequence of Anabaena variabilis ATCC 29413.</title>
        <authorList>
            <person name="Thiel T."/>
            <person name="Pratte B.S."/>
            <person name="Zhong J."/>
            <person name="Goodwin L."/>
            <person name="Copeland A."/>
            <person name="Lucas S."/>
            <person name="Han C."/>
            <person name="Pitluck S."/>
            <person name="Land M.L."/>
            <person name="Kyrpides N.C."/>
            <person name="Woyke T."/>
        </authorList>
    </citation>
    <scope>NUCLEOTIDE SEQUENCE [LARGE SCALE GENOMIC DNA]</scope>
    <source>
        <strain>ATCC 29413 / PCC 7937</strain>
    </source>
</reference>
<dbReference type="EC" id="2.7.7.77" evidence="1"/>
<dbReference type="EMBL" id="CP000117">
    <property type="protein sequence ID" value="ABA20164.1"/>
    <property type="molecule type" value="Genomic_DNA"/>
</dbReference>
<dbReference type="SMR" id="Q3MFS2"/>
<dbReference type="STRING" id="240292.Ava_0540"/>
<dbReference type="KEGG" id="ava:Ava_0540"/>
<dbReference type="eggNOG" id="COG0746">
    <property type="taxonomic scope" value="Bacteria"/>
</dbReference>
<dbReference type="HOGENOM" id="CLU_055597_2_2_3"/>
<dbReference type="Proteomes" id="UP000002533">
    <property type="component" value="Chromosome"/>
</dbReference>
<dbReference type="GO" id="GO:0005737">
    <property type="term" value="C:cytoplasm"/>
    <property type="evidence" value="ECO:0007669"/>
    <property type="project" value="UniProtKB-SubCell"/>
</dbReference>
<dbReference type="GO" id="GO:0005525">
    <property type="term" value="F:GTP binding"/>
    <property type="evidence" value="ECO:0007669"/>
    <property type="project" value="UniProtKB-UniRule"/>
</dbReference>
<dbReference type="GO" id="GO:0046872">
    <property type="term" value="F:metal ion binding"/>
    <property type="evidence" value="ECO:0007669"/>
    <property type="project" value="UniProtKB-KW"/>
</dbReference>
<dbReference type="GO" id="GO:0061603">
    <property type="term" value="F:molybdenum cofactor guanylyltransferase activity"/>
    <property type="evidence" value="ECO:0007669"/>
    <property type="project" value="UniProtKB-EC"/>
</dbReference>
<dbReference type="GO" id="GO:0006777">
    <property type="term" value="P:Mo-molybdopterin cofactor biosynthetic process"/>
    <property type="evidence" value="ECO:0007669"/>
    <property type="project" value="UniProtKB-KW"/>
</dbReference>
<dbReference type="CDD" id="cd02503">
    <property type="entry name" value="MobA"/>
    <property type="match status" value="1"/>
</dbReference>
<dbReference type="Gene3D" id="3.90.550.10">
    <property type="entry name" value="Spore Coat Polysaccharide Biosynthesis Protein SpsA, Chain A"/>
    <property type="match status" value="1"/>
</dbReference>
<dbReference type="HAMAP" id="MF_00316">
    <property type="entry name" value="MobA"/>
    <property type="match status" value="1"/>
</dbReference>
<dbReference type="InterPro" id="IPR025877">
    <property type="entry name" value="MobA-like_NTP_Trfase"/>
</dbReference>
<dbReference type="InterPro" id="IPR013482">
    <property type="entry name" value="Molybde_CF_guanTrfase"/>
</dbReference>
<dbReference type="InterPro" id="IPR029044">
    <property type="entry name" value="Nucleotide-diphossugar_trans"/>
</dbReference>
<dbReference type="NCBIfam" id="NF002741">
    <property type="entry name" value="PRK02726.1"/>
    <property type="match status" value="1"/>
</dbReference>
<dbReference type="PANTHER" id="PTHR19136">
    <property type="entry name" value="MOLYBDENUM COFACTOR GUANYLYLTRANSFERASE"/>
    <property type="match status" value="1"/>
</dbReference>
<dbReference type="PANTHER" id="PTHR19136:SF81">
    <property type="entry name" value="MOLYBDENUM COFACTOR GUANYLYLTRANSFERASE"/>
    <property type="match status" value="1"/>
</dbReference>
<dbReference type="Pfam" id="PF12804">
    <property type="entry name" value="NTP_transf_3"/>
    <property type="match status" value="1"/>
</dbReference>
<dbReference type="SUPFAM" id="SSF53448">
    <property type="entry name" value="Nucleotide-diphospho-sugar transferases"/>
    <property type="match status" value="1"/>
</dbReference>
<protein>
    <recommendedName>
        <fullName evidence="1">Probable molybdenum cofactor guanylyltransferase</fullName>
        <shortName evidence="1">MoCo guanylyltransferase</shortName>
        <ecNumber evidence="1">2.7.7.77</ecNumber>
    </recommendedName>
    <alternativeName>
        <fullName evidence="1">GTP:molybdopterin guanylyltransferase</fullName>
    </alternativeName>
    <alternativeName>
        <fullName evidence="1">Mo-MPT guanylyltransferase</fullName>
    </alternativeName>
    <alternativeName>
        <fullName evidence="1">Molybdopterin guanylyltransferase</fullName>
    </alternativeName>
    <alternativeName>
        <fullName evidence="1">Molybdopterin-guanine dinucleotide synthase</fullName>
        <shortName evidence="1">MGD synthase</shortName>
    </alternativeName>
</protein>
<name>MOBA_TRIV2</name>
<comment type="function">
    <text evidence="1">Transfers a GMP moiety from GTP to Mo-molybdopterin (Mo-MPT) cofactor (Moco or molybdenum cofactor) to form Mo-molybdopterin guanine dinucleotide (Mo-MGD) cofactor.</text>
</comment>
<comment type="catalytic activity">
    <reaction evidence="1">
        <text>Mo-molybdopterin + GTP + H(+) = Mo-molybdopterin guanine dinucleotide + diphosphate</text>
        <dbReference type="Rhea" id="RHEA:34243"/>
        <dbReference type="ChEBI" id="CHEBI:15378"/>
        <dbReference type="ChEBI" id="CHEBI:33019"/>
        <dbReference type="ChEBI" id="CHEBI:37565"/>
        <dbReference type="ChEBI" id="CHEBI:71302"/>
        <dbReference type="ChEBI" id="CHEBI:71310"/>
        <dbReference type="EC" id="2.7.7.77"/>
    </reaction>
</comment>
<comment type="cofactor">
    <cofactor evidence="1">
        <name>Mg(2+)</name>
        <dbReference type="ChEBI" id="CHEBI:18420"/>
    </cofactor>
</comment>
<comment type="subcellular location">
    <subcellularLocation>
        <location evidence="1">Cytoplasm</location>
    </subcellularLocation>
</comment>
<comment type="domain">
    <text evidence="1">The N-terminal domain determines nucleotide recognition and specific binding, while the C-terminal domain determines the specific binding to the target protein.</text>
</comment>
<comment type="similarity">
    <text evidence="1">Belongs to the MobA family.</text>
</comment>
<evidence type="ECO:0000255" key="1">
    <source>
        <dbReference type="HAMAP-Rule" id="MF_00316"/>
    </source>
</evidence>
<accession>Q3MFS2</accession>
<gene>
    <name evidence="1" type="primary">mobA</name>
    <name type="ordered locus">Ava_0540</name>
</gene>